<sequence length="502" mass="56149">MSLWRSNEATVYLPPVSVSKVVSTDEYVTRTNIYYHAGSSRLLAVGHPYYAIKKQDSNKIAVPKVSGLQYRVFRVKLPDPNKFGFPDTSFYDPASQRLVWACTGVEVGRGQPLGVGISGHPLLNKLDDTENSNKYVGNSGTDNRECISMDYKQTQLCLIGCRPPIGEHWGKGTPCNANQVKAGECPPLELLNTVLQDGDMVDTGFGAMDFTTLQANKSDVPLDICSSICKYPDYLKMVSEPYGDMLFFYLRREQMFVRHLFNRAGTVGETVPADLYIKGTTGTLPSTSYFPTPSGSMVTSDAQIFNKPYWLQRAQGHNNGICWSNQLFVTVVDTTRSTNMSVCSAVSSSDSTYKNDNFKEYLRHGEEYDLQFIFQLCKITLTADVMTYIHSMNPSILEDWNFGLTPPPSGTLEDTYRYVTSQAVTCQKPSAPKPKDDPLKNYTFWEVDLKEKFSADLDQFPLGRKFLLQAGLKARPNFRLGKRAAPASTSKKSSTKRRKVKS</sequence>
<proteinExistence type="evidence at protein level"/>
<protein>
    <recommendedName>
        <fullName evidence="1">Major capsid protein L1</fullName>
    </recommendedName>
</protein>
<comment type="function">
    <text evidence="1">Forms an icosahedral capsid with a T=7 symmetry and a 50 nm diameter. The capsid is composed of 72 pentamers linked to each other by disulfide bonds and associated with L2 proteins. Binds to heparan sulfate proteoglycans on cell surface of basal layer keratinocytes to provide initial virion attachment. This binding mediates a conformational change in the virus capsid that facilitates efficient infection. The virion enters the host cell via endocytosis. During virus trafficking, L1 protein dissociates from the viral DNA and the genomic DNA is released to the host nucleus. The virion assembly takes place within the cell nucleus. Encapsulates the genomic DNA together with protein L2.</text>
</comment>
<comment type="subunit">
    <text evidence="1">Self-assembles into homopentamers. The capsid has an icosahedral symmetry and consists of 72 capsomers, with each capsomer being a pentamer of L1. Interacts with the minor capsid protein L2; this interaction is necessary for viral genome encapsidation. Interacts with protein E2; this interaction enhances E2-dependent replication and transcription activation.</text>
</comment>
<comment type="subcellular location">
    <subcellularLocation>
        <location evidence="1">Virion</location>
    </subcellularLocation>
    <subcellularLocation>
        <location evidence="1">Host nucleus</location>
    </subcellularLocation>
</comment>
<comment type="similarity">
    <text evidence="1">Belongs to the papillomaviridae L1 protein family.</text>
</comment>
<gene>
    <name evidence="1" type="primary">L1</name>
</gene>
<evidence type="ECO:0000255" key="1">
    <source>
        <dbReference type="HAMAP-Rule" id="MF_04002"/>
    </source>
</evidence>
<evidence type="ECO:0000256" key="2">
    <source>
        <dbReference type="SAM" id="MobiDB-lite"/>
    </source>
</evidence>
<evidence type="ECO:0000305" key="3"/>
<evidence type="ECO:0007829" key="4">
    <source>
        <dbReference type="PDB" id="2R5J"/>
    </source>
</evidence>
<name>VL1_HPV35</name>
<dbReference type="EMBL" id="X74477">
    <property type="protein sequence ID" value="CAA52566.1"/>
    <property type="molecule type" value="Genomic_DNA"/>
</dbReference>
<dbReference type="EMBL" id="M74117">
    <property type="protein sequence ID" value="AAA46972.1"/>
    <property type="molecule type" value="Genomic_DNA"/>
</dbReference>
<dbReference type="EMBL" id="S40240">
    <property type="protein sequence ID" value="AAB22564.1"/>
    <property type="molecule type" value="Genomic_DNA"/>
</dbReference>
<dbReference type="PIR" id="G40824">
    <property type="entry name" value="P1WL35"/>
</dbReference>
<dbReference type="PIR" id="S36526">
    <property type="entry name" value="S36526"/>
</dbReference>
<dbReference type="PDB" id="2R5J">
    <property type="method" value="X-ray"/>
    <property type="resolution" value="3.30 A"/>
    <property type="chains" value="A/B/C/D/E/F/G/H/I/J/K/L/M/N/O=21-401, A/B/C/D/E/F/G/H/I/J/K/L/M/N/O=437-472"/>
</dbReference>
<dbReference type="PDBsum" id="2R5J"/>
<dbReference type="SMR" id="P27232"/>
<dbReference type="EvolutionaryTrace" id="P27232"/>
<dbReference type="Proteomes" id="UP000007711">
    <property type="component" value="Segment"/>
</dbReference>
<dbReference type="Proteomes" id="UP000113298">
    <property type="component" value="Genome"/>
</dbReference>
<dbReference type="GO" id="GO:0042025">
    <property type="term" value="C:host cell nucleus"/>
    <property type="evidence" value="ECO:0007669"/>
    <property type="project" value="UniProtKB-SubCell"/>
</dbReference>
<dbReference type="GO" id="GO:0039620">
    <property type="term" value="C:T=7 icosahedral viral capsid"/>
    <property type="evidence" value="ECO:0007669"/>
    <property type="project" value="UniProtKB-UniRule"/>
</dbReference>
<dbReference type="GO" id="GO:0005198">
    <property type="term" value="F:structural molecule activity"/>
    <property type="evidence" value="ECO:0007669"/>
    <property type="project" value="UniProtKB-UniRule"/>
</dbReference>
<dbReference type="GO" id="GO:0075509">
    <property type="term" value="P:endocytosis involved in viral entry into host cell"/>
    <property type="evidence" value="ECO:0007669"/>
    <property type="project" value="UniProtKB-KW"/>
</dbReference>
<dbReference type="GO" id="GO:0019062">
    <property type="term" value="P:virion attachment to host cell"/>
    <property type="evidence" value="ECO:0007669"/>
    <property type="project" value="UniProtKB-UniRule"/>
</dbReference>
<dbReference type="Gene3D" id="2.60.175.20">
    <property type="entry name" value="Major capsid L1 (late) superfamily, Papillomavirus"/>
    <property type="match status" value="2"/>
</dbReference>
<dbReference type="HAMAP" id="MF_04002">
    <property type="entry name" value="PPV_L1"/>
    <property type="match status" value="1"/>
</dbReference>
<dbReference type="InterPro" id="IPR002210">
    <property type="entry name" value="Capsid_L1_Papillomavir"/>
</dbReference>
<dbReference type="InterPro" id="IPR036973">
    <property type="entry name" value="Capsid_L1_sf_Papillomavir"/>
</dbReference>
<dbReference type="InterPro" id="IPR011222">
    <property type="entry name" value="dsDNA_vir_gr_I_capsid"/>
</dbReference>
<dbReference type="Pfam" id="PF00500">
    <property type="entry name" value="Late_protein_L1"/>
    <property type="match status" value="1"/>
</dbReference>
<dbReference type="PRINTS" id="PR00865">
    <property type="entry name" value="HPVCAPSIDL1"/>
</dbReference>
<dbReference type="SUPFAM" id="SSF88648">
    <property type="entry name" value="Group I dsDNA viruses"/>
    <property type="match status" value="1"/>
</dbReference>
<feature type="chain" id="PRO_0000133519" description="Major capsid protein L1">
    <location>
        <begin position="1"/>
        <end position="502"/>
    </location>
</feature>
<feature type="region of interest" description="Disordered" evidence="2">
    <location>
        <begin position="479"/>
        <end position="502"/>
    </location>
</feature>
<feature type="compositionally biased region" description="Basic residues" evidence="2">
    <location>
        <begin position="493"/>
        <end position="502"/>
    </location>
</feature>
<feature type="disulfide bond" description="Interchain (with C-426)" evidence="1">
    <location>
        <position position="175"/>
    </location>
</feature>
<feature type="disulfide bond" description="Interchain (with C-175)" evidence="1">
    <location>
        <position position="426"/>
    </location>
</feature>
<feature type="sequence conflict" description="In Ref. 2; AAA46972." evidence="3" ref="2">
    <original>AS</original>
    <variation>CL</variation>
    <location>
        <begin position="94"/>
        <end position="95"/>
    </location>
</feature>
<feature type="sequence conflict" description="In Ref. 2; AAA46972." evidence="3" ref="2">
    <original>S</original>
    <variation>L</variation>
    <location>
        <position position="132"/>
    </location>
</feature>
<feature type="sequence conflict" description="In Ref. 2." evidence="3" ref="2">
    <original>G</original>
    <variation>GNSG</variation>
    <location>
        <position position="140"/>
    </location>
</feature>
<feature type="sequence conflict" description="In Ref. 2; AAA46972." evidence="3" ref="2">
    <original>K</original>
    <variation>R</variation>
    <location>
        <position position="482"/>
    </location>
</feature>
<feature type="helix" evidence="4">
    <location>
        <begin position="24"/>
        <end position="26"/>
    </location>
</feature>
<feature type="strand" evidence="4">
    <location>
        <begin position="29"/>
        <end position="38"/>
    </location>
</feature>
<feature type="strand" evidence="4">
    <location>
        <begin position="42"/>
        <end position="50"/>
    </location>
</feature>
<feature type="strand" evidence="4">
    <location>
        <begin position="55"/>
        <end position="57"/>
    </location>
</feature>
<feature type="strand" evidence="4">
    <location>
        <begin position="59"/>
        <end position="62"/>
    </location>
</feature>
<feature type="strand" evidence="4">
    <location>
        <begin position="72"/>
        <end position="76"/>
    </location>
</feature>
<feature type="turn" evidence="4">
    <location>
        <begin position="80"/>
        <end position="82"/>
    </location>
</feature>
<feature type="turn" evidence="4">
    <location>
        <begin position="93"/>
        <end position="95"/>
    </location>
</feature>
<feature type="strand" evidence="4">
    <location>
        <begin position="96"/>
        <end position="102"/>
    </location>
</feature>
<feature type="strand" evidence="4">
    <location>
        <begin position="104"/>
        <end position="109"/>
    </location>
</feature>
<feature type="strand" evidence="4">
    <location>
        <begin position="120"/>
        <end position="123"/>
    </location>
</feature>
<feature type="strand" evidence="4">
    <location>
        <begin position="145"/>
        <end position="147"/>
    </location>
</feature>
<feature type="strand" evidence="4">
    <location>
        <begin position="153"/>
        <end position="162"/>
    </location>
</feature>
<feature type="strand" evidence="4">
    <location>
        <begin position="165"/>
        <end position="171"/>
    </location>
</feature>
<feature type="strand" evidence="4">
    <location>
        <begin position="176"/>
        <end position="178"/>
    </location>
</feature>
<feature type="strand" evidence="4">
    <location>
        <begin position="188"/>
        <end position="194"/>
    </location>
</feature>
<feature type="strand" evidence="4">
    <location>
        <begin position="207"/>
        <end position="209"/>
    </location>
</feature>
<feature type="helix" evidence="4">
    <location>
        <begin position="210"/>
        <end position="213"/>
    </location>
</feature>
<feature type="helix" evidence="4">
    <location>
        <begin position="222"/>
        <end position="225"/>
    </location>
</feature>
<feature type="strand" evidence="4">
    <location>
        <begin position="227"/>
        <end position="232"/>
    </location>
</feature>
<feature type="helix" evidence="4">
    <location>
        <begin position="234"/>
        <end position="239"/>
    </location>
</feature>
<feature type="strand" evidence="4">
    <location>
        <begin position="249"/>
        <end position="262"/>
    </location>
</feature>
<feature type="strand" evidence="4">
    <location>
        <begin position="265"/>
        <end position="269"/>
    </location>
</feature>
<feature type="helix" evidence="4">
    <location>
        <begin position="273"/>
        <end position="275"/>
    </location>
</feature>
<feature type="strand" evidence="4">
    <location>
        <begin position="289"/>
        <end position="294"/>
    </location>
</feature>
<feature type="strand" evidence="4">
    <location>
        <begin position="297"/>
        <end position="299"/>
    </location>
</feature>
<feature type="turn" evidence="4">
    <location>
        <begin position="300"/>
        <end position="302"/>
    </location>
</feature>
<feature type="strand" evidence="4">
    <location>
        <begin position="305"/>
        <end position="310"/>
    </location>
</feature>
<feature type="strand" evidence="4">
    <location>
        <begin position="315"/>
        <end position="317"/>
    </location>
</feature>
<feature type="helix" evidence="4">
    <location>
        <begin position="323"/>
        <end position="325"/>
    </location>
</feature>
<feature type="strand" evidence="4">
    <location>
        <begin position="326"/>
        <end position="333"/>
    </location>
</feature>
<feature type="strand" evidence="4">
    <location>
        <begin position="340"/>
        <end position="346"/>
    </location>
</feature>
<feature type="helix" evidence="4">
    <location>
        <begin position="355"/>
        <end position="357"/>
    </location>
</feature>
<feature type="strand" evidence="4">
    <location>
        <begin position="358"/>
        <end position="380"/>
    </location>
</feature>
<feature type="helix" evidence="4">
    <location>
        <begin position="383"/>
        <end position="392"/>
    </location>
</feature>
<feature type="helix" evidence="4">
    <location>
        <begin position="394"/>
        <end position="398"/>
    </location>
</feature>
<feature type="strand" evidence="4">
    <location>
        <begin position="445"/>
        <end position="448"/>
    </location>
</feature>
<feature type="helix" evidence="4">
    <location>
        <begin position="450"/>
        <end position="452"/>
    </location>
</feature>
<feature type="strand" evidence="4">
    <location>
        <begin position="453"/>
        <end position="455"/>
    </location>
</feature>
<feature type="helix" evidence="4">
    <location>
        <begin position="457"/>
        <end position="459"/>
    </location>
</feature>
<feature type="helix" evidence="4">
    <location>
        <begin position="461"/>
        <end position="470"/>
    </location>
</feature>
<keyword id="KW-0002">3D-structure</keyword>
<keyword id="KW-0167">Capsid protein</keyword>
<keyword id="KW-1015">Disulfide bond</keyword>
<keyword id="KW-1048">Host nucleus</keyword>
<keyword id="KW-0945">Host-virus interaction</keyword>
<keyword id="KW-0426">Late protein</keyword>
<keyword id="KW-1185">Reference proteome</keyword>
<keyword id="KW-1145">T=7 icosahedral capsid protein</keyword>
<keyword id="KW-1161">Viral attachment to host cell</keyword>
<keyword id="KW-1162">Viral penetration into host cytoplasm</keyword>
<keyword id="KW-0946">Virion</keyword>
<keyword id="KW-1164">Virus endocytosis by host</keyword>
<keyword id="KW-1160">Virus entry into host cell</keyword>
<reference key="1">
    <citation type="journal article" date="1994" name="Curr. Top. Microbiol. Immunol.">
        <title>Primer-directed sequencing of human papillomavirus types.</title>
        <authorList>
            <person name="Delius H."/>
            <person name="Hofmann B."/>
        </authorList>
    </citation>
    <scope>NUCLEOTIDE SEQUENCE [GENOMIC DNA]</scope>
    <source>
        <strain>Isolate 35H</strain>
    </source>
</reference>
<reference key="2">
    <citation type="journal article" date="1992" name="Virology">
        <title>The phylogenetic relationship and complete nucleotide sequence of human papillomavirus type 35.</title>
        <authorList>
            <person name="Marich J.E."/>
            <person name="Pontsler A.V."/>
            <person name="Rice S.M."/>
            <person name="McGraw K.A."/>
            <person name="Dubensky T.W."/>
        </authorList>
    </citation>
    <scope>NUCLEOTIDE SEQUENCE [GENOMIC DNA]</scope>
</reference>
<reference key="3">
    <citation type="journal article" date="1992" name="J. Clin. Microbiol.">
        <title>General primer polymerase chain reaction in combination with sequence analysis for identification of potentially novel human papillomavirus genotypes in cervical lesions.</title>
        <authorList>
            <person name="van den Brule A.J."/>
            <person name="Snijders P.J."/>
            <person name="Raaphorst P.M."/>
            <person name="Schrijnemakers H.F."/>
            <person name="Delius H."/>
            <person name="Gissmann L."/>
            <person name="Meijer C.J."/>
            <person name="Walboomers J.M."/>
        </authorList>
    </citation>
    <scope>NUCLEOTIDE SEQUENCE [GENOMIC DNA] OF 335-367</scope>
</reference>
<organismHost>
    <name type="scientific">Homo sapiens</name>
    <name type="common">Human</name>
    <dbReference type="NCBI Taxonomy" id="9606"/>
</organismHost>
<accession>P27232</accession>
<accession>Q90077</accession>
<organism>
    <name type="scientific">Human papillomavirus 35</name>
    <dbReference type="NCBI Taxonomy" id="10587"/>
    <lineage>
        <taxon>Viruses</taxon>
        <taxon>Monodnaviria</taxon>
        <taxon>Shotokuvirae</taxon>
        <taxon>Cossaviricota</taxon>
        <taxon>Papovaviricetes</taxon>
        <taxon>Zurhausenvirales</taxon>
        <taxon>Papillomaviridae</taxon>
        <taxon>Firstpapillomavirinae</taxon>
        <taxon>Alphapapillomavirus</taxon>
        <taxon>Alphapapillomavirus 9</taxon>
    </lineage>
</organism>